<name>RH51_ARATH</name>
<keyword id="KW-0067">ATP-binding</keyword>
<keyword id="KW-0175">Coiled coil</keyword>
<keyword id="KW-0347">Helicase</keyword>
<keyword id="KW-0378">Hydrolase</keyword>
<keyword id="KW-0547">Nucleotide-binding</keyword>
<keyword id="KW-1185">Reference proteome</keyword>
<keyword id="KW-0694">RNA-binding</keyword>
<protein>
    <recommendedName>
        <fullName>DEAD-box ATP-dependent RNA helicase 51</fullName>
        <ecNumber>3.6.4.13</ecNumber>
    </recommendedName>
</protein>
<sequence>MVESDKSSVEELKKRVRKRSRGKKNEQQKAEEKTHTVEENADETQKKSEKKVKKVRGKIEEEEEKVEAMEDGEDEKNIVIVGKGIMTNVTFDSLDLSEQTSIAIKEMGFQYMTQIQAGSIQPLLEGKDVLGAARTGSGKTLAFLIPAVELLFKERFSPRNGTGVIVICPTRELAIQTKNVAEELLKHHSQTVSMVIGGNNRRSEAQRIASGSNLVIATPGRLLDHLQNTKAFIYKHLKCLVIDEADRILEENFEEDMNKILKILPKTRQTALFSATQTSKVKDLARVSLTSPVHVDVDDGRRKVTNEGLEQGYCVVPSKQRLILLISFLKKNLNKKIMVFFSTCKSVQFHTEIMKISDVDVSDIHGGMDQNRRTKTFFDFMKAKKGILLCTDVAARGLDIPSVDWIIQYDPPDKPTEYIHRVGRTARGEGAKGKALLVLIPEELQFIRYLKAAKVPVKELEFNEKRLSNVQSALEKCVAKDYNLNKLAKDAYRAYLSAYNSHSLKDIFNVHRLDLLAVAESFCFSSPPKVNLNIESGAGKVRKARKQQGRNGFSPYSPYGKSTPTKEA</sequence>
<reference key="1">
    <citation type="journal article" date="2000" name="DNA Res.">
        <title>Structural analysis of Arabidopsis thaliana chromosome 3. II. Sequence features of the 4,251,695 bp regions covered by 90 P1, TAC and BAC clones.</title>
        <authorList>
            <person name="Kaneko T."/>
            <person name="Katoh T."/>
            <person name="Sato S."/>
            <person name="Nakamura Y."/>
            <person name="Asamizu E."/>
            <person name="Tabata S."/>
        </authorList>
    </citation>
    <scope>NUCLEOTIDE SEQUENCE [LARGE SCALE GENOMIC DNA]</scope>
    <source>
        <strain>cv. Columbia</strain>
    </source>
</reference>
<reference key="2">
    <citation type="journal article" date="2017" name="Plant J.">
        <title>Araport11: a complete reannotation of the Arabidopsis thaliana reference genome.</title>
        <authorList>
            <person name="Cheng C.Y."/>
            <person name="Krishnakumar V."/>
            <person name="Chan A.P."/>
            <person name="Thibaud-Nissen F."/>
            <person name="Schobel S."/>
            <person name="Town C.D."/>
        </authorList>
    </citation>
    <scope>GENOME REANNOTATION</scope>
    <source>
        <strain>cv. Columbia</strain>
    </source>
</reference>
<reference key="3">
    <citation type="journal article" date="2003" name="Science">
        <title>Empirical analysis of transcriptional activity in the Arabidopsis genome.</title>
        <authorList>
            <person name="Yamada K."/>
            <person name="Lim J."/>
            <person name="Dale J.M."/>
            <person name="Chen H."/>
            <person name="Shinn P."/>
            <person name="Palm C.J."/>
            <person name="Southwick A.M."/>
            <person name="Wu H.C."/>
            <person name="Kim C.J."/>
            <person name="Nguyen M."/>
            <person name="Pham P.K."/>
            <person name="Cheuk R.F."/>
            <person name="Karlin-Newmann G."/>
            <person name="Liu S.X."/>
            <person name="Lam B."/>
            <person name="Sakano H."/>
            <person name="Wu T."/>
            <person name="Yu G."/>
            <person name="Miranda M."/>
            <person name="Quach H.L."/>
            <person name="Tripp M."/>
            <person name="Chang C.H."/>
            <person name="Lee J.M."/>
            <person name="Toriumi M.J."/>
            <person name="Chan M.M."/>
            <person name="Tang C.C."/>
            <person name="Onodera C.S."/>
            <person name="Deng J.M."/>
            <person name="Akiyama K."/>
            <person name="Ansari Y."/>
            <person name="Arakawa T."/>
            <person name="Banh J."/>
            <person name="Banno F."/>
            <person name="Bowser L."/>
            <person name="Brooks S.Y."/>
            <person name="Carninci P."/>
            <person name="Chao Q."/>
            <person name="Choy N."/>
            <person name="Enju A."/>
            <person name="Goldsmith A.D."/>
            <person name="Gurjal M."/>
            <person name="Hansen N.F."/>
            <person name="Hayashizaki Y."/>
            <person name="Johnson-Hopson C."/>
            <person name="Hsuan V.W."/>
            <person name="Iida K."/>
            <person name="Karnes M."/>
            <person name="Khan S."/>
            <person name="Koesema E."/>
            <person name="Ishida J."/>
            <person name="Jiang P.X."/>
            <person name="Jones T."/>
            <person name="Kawai J."/>
            <person name="Kamiya A."/>
            <person name="Meyers C."/>
            <person name="Nakajima M."/>
            <person name="Narusaka M."/>
            <person name="Seki M."/>
            <person name="Sakurai T."/>
            <person name="Satou M."/>
            <person name="Tamse R."/>
            <person name="Vaysberg M."/>
            <person name="Wallender E.K."/>
            <person name="Wong C."/>
            <person name="Yamamura Y."/>
            <person name="Yuan S."/>
            <person name="Shinozaki K."/>
            <person name="Davis R.W."/>
            <person name="Theologis A."/>
            <person name="Ecker J.R."/>
        </authorList>
    </citation>
    <scope>NUCLEOTIDE SEQUENCE [LARGE SCALE MRNA]</scope>
    <source>
        <strain>cv. Columbia</strain>
    </source>
</reference>
<reference key="4">
    <citation type="journal article" date="2004" name="Plant Biotechnol. J.">
        <title>DEAD-box RNA helicases in Arabidopsis thaliana: establishing a link between quantitative expression, gene structure and evolution of a family of genes.</title>
        <authorList>
            <person name="Mingam A."/>
            <person name="Toffano-Nioche C."/>
            <person name="Brunaud V."/>
            <person name="Boudet N."/>
            <person name="Kreis M."/>
            <person name="Lecharny A."/>
        </authorList>
    </citation>
    <scope>GENE FAMILY</scope>
    <scope>NOMENCLATURE</scope>
</reference>
<reference key="5">
    <citation type="journal article" date="2013" name="PLoS ONE">
        <title>Genome-wide comparative in silico analysis of the RNA helicase gene family in Zea mays and Glycine max: a comparison with Arabidopsis and Oryza sativa.</title>
        <authorList>
            <person name="Xu R."/>
            <person name="Zhang S."/>
            <person name="Huang J."/>
            <person name="Zheng C."/>
        </authorList>
    </citation>
    <scope>GENE FAMILY</scope>
</reference>
<proteinExistence type="evidence at transcript level"/>
<accession>Q9LIH9</accession>
<organism>
    <name type="scientific">Arabidopsis thaliana</name>
    <name type="common">Mouse-ear cress</name>
    <dbReference type="NCBI Taxonomy" id="3702"/>
    <lineage>
        <taxon>Eukaryota</taxon>
        <taxon>Viridiplantae</taxon>
        <taxon>Streptophyta</taxon>
        <taxon>Embryophyta</taxon>
        <taxon>Tracheophyta</taxon>
        <taxon>Spermatophyta</taxon>
        <taxon>Magnoliopsida</taxon>
        <taxon>eudicotyledons</taxon>
        <taxon>Gunneridae</taxon>
        <taxon>Pentapetalae</taxon>
        <taxon>rosids</taxon>
        <taxon>malvids</taxon>
        <taxon>Brassicales</taxon>
        <taxon>Brassicaceae</taxon>
        <taxon>Camelineae</taxon>
        <taxon>Arabidopsis</taxon>
    </lineage>
</organism>
<comment type="catalytic activity">
    <reaction>
        <text>ATP + H2O = ADP + phosphate + H(+)</text>
        <dbReference type="Rhea" id="RHEA:13065"/>
        <dbReference type="ChEBI" id="CHEBI:15377"/>
        <dbReference type="ChEBI" id="CHEBI:15378"/>
        <dbReference type="ChEBI" id="CHEBI:30616"/>
        <dbReference type="ChEBI" id="CHEBI:43474"/>
        <dbReference type="ChEBI" id="CHEBI:456216"/>
        <dbReference type="EC" id="3.6.4.13"/>
    </reaction>
</comment>
<comment type="domain">
    <text>The Q motif is unique to and characteristic of the DEAD box family of RNA helicases and controls ATP binding and hydrolysis.</text>
</comment>
<comment type="similarity">
    <text evidence="5">Belongs to the DEAD box helicase family. DDX18/HAS1 subfamily.</text>
</comment>
<dbReference type="EC" id="3.6.4.13"/>
<dbReference type="EMBL" id="AP001303">
    <property type="protein sequence ID" value="BAB02218.1"/>
    <property type="molecule type" value="Genomic_DNA"/>
</dbReference>
<dbReference type="EMBL" id="CP002686">
    <property type="protein sequence ID" value="AEE76121.1"/>
    <property type="molecule type" value="Genomic_DNA"/>
</dbReference>
<dbReference type="EMBL" id="AY070052">
    <property type="protein sequence ID" value="AAL49809.1"/>
    <property type="molecule type" value="mRNA"/>
</dbReference>
<dbReference type="EMBL" id="AY096431">
    <property type="protein sequence ID" value="AAM20071.1"/>
    <property type="molecule type" value="mRNA"/>
</dbReference>
<dbReference type="RefSeq" id="NP_188490.1">
    <property type="nucleotide sequence ID" value="NM_112746.6"/>
</dbReference>
<dbReference type="SMR" id="Q9LIH9"/>
<dbReference type="BioGRID" id="6724">
    <property type="interactions" value="2"/>
</dbReference>
<dbReference type="FunCoup" id="Q9LIH9">
    <property type="interactions" value="3952"/>
</dbReference>
<dbReference type="STRING" id="3702.Q9LIH9"/>
<dbReference type="iPTMnet" id="Q9LIH9"/>
<dbReference type="PaxDb" id="3702-AT3G18600.1"/>
<dbReference type="ProteomicsDB" id="236903"/>
<dbReference type="DNASU" id="821391"/>
<dbReference type="EnsemblPlants" id="AT3G18600.1">
    <property type="protein sequence ID" value="AT3G18600.1"/>
    <property type="gene ID" value="AT3G18600"/>
</dbReference>
<dbReference type="GeneID" id="821391"/>
<dbReference type="Gramene" id="AT3G18600.1">
    <property type="protein sequence ID" value="AT3G18600.1"/>
    <property type="gene ID" value="AT3G18600"/>
</dbReference>
<dbReference type="KEGG" id="ath:AT3G18600"/>
<dbReference type="Araport" id="AT3G18600"/>
<dbReference type="TAIR" id="AT3G18600"/>
<dbReference type="eggNOG" id="KOG0342">
    <property type="taxonomic scope" value="Eukaryota"/>
</dbReference>
<dbReference type="HOGENOM" id="CLU_003041_26_5_1"/>
<dbReference type="InParanoid" id="Q9LIH9"/>
<dbReference type="OMA" id="LMEFHSQ"/>
<dbReference type="PhylomeDB" id="Q9LIH9"/>
<dbReference type="CD-CODE" id="4299E36E">
    <property type="entry name" value="Nucleolus"/>
</dbReference>
<dbReference type="PRO" id="PR:Q9LIH9"/>
<dbReference type="Proteomes" id="UP000006548">
    <property type="component" value="Chromosome 3"/>
</dbReference>
<dbReference type="ExpressionAtlas" id="Q9LIH9">
    <property type="expression patterns" value="baseline and differential"/>
</dbReference>
<dbReference type="GO" id="GO:0005730">
    <property type="term" value="C:nucleolus"/>
    <property type="evidence" value="ECO:0007005"/>
    <property type="project" value="TAIR"/>
</dbReference>
<dbReference type="GO" id="GO:0005524">
    <property type="term" value="F:ATP binding"/>
    <property type="evidence" value="ECO:0007669"/>
    <property type="project" value="UniProtKB-KW"/>
</dbReference>
<dbReference type="GO" id="GO:0016887">
    <property type="term" value="F:ATP hydrolysis activity"/>
    <property type="evidence" value="ECO:0007669"/>
    <property type="project" value="RHEA"/>
</dbReference>
<dbReference type="GO" id="GO:0003723">
    <property type="term" value="F:RNA binding"/>
    <property type="evidence" value="ECO:0007669"/>
    <property type="project" value="UniProtKB-KW"/>
</dbReference>
<dbReference type="GO" id="GO:0003724">
    <property type="term" value="F:RNA helicase activity"/>
    <property type="evidence" value="ECO:0007669"/>
    <property type="project" value="UniProtKB-EC"/>
</dbReference>
<dbReference type="CDD" id="cd17942">
    <property type="entry name" value="DEADc_DDX18"/>
    <property type="match status" value="1"/>
</dbReference>
<dbReference type="CDD" id="cd18787">
    <property type="entry name" value="SF2_C_DEAD"/>
    <property type="match status" value="1"/>
</dbReference>
<dbReference type="FunFam" id="3.40.50.300:FF:000379">
    <property type="entry name" value="RNA helicase"/>
    <property type="match status" value="1"/>
</dbReference>
<dbReference type="FunFam" id="3.40.50.300:FF:002173">
    <property type="entry name" value="RNA helicase"/>
    <property type="match status" value="1"/>
</dbReference>
<dbReference type="Gene3D" id="3.40.50.300">
    <property type="entry name" value="P-loop containing nucleotide triphosphate hydrolases"/>
    <property type="match status" value="2"/>
</dbReference>
<dbReference type="InterPro" id="IPR044773">
    <property type="entry name" value="DDX18/Has1_DEADc"/>
</dbReference>
<dbReference type="InterPro" id="IPR011545">
    <property type="entry name" value="DEAD/DEAH_box_helicase_dom"/>
</dbReference>
<dbReference type="InterPro" id="IPR014001">
    <property type="entry name" value="Helicase_ATP-bd"/>
</dbReference>
<dbReference type="InterPro" id="IPR001650">
    <property type="entry name" value="Helicase_C-like"/>
</dbReference>
<dbReference type="InterPro" id="IPR027417">
    <property type="entry name" value="P-loop_NTPase"/>
</dbReference>
<dbReference type="InterPro" id="IPR000629">
    <property type="entry name" value="RNA-helicase_DEAD-box_CS"/>
</dbReference>
<dbReference type="InterPro" id="IPR014014">
    <property type="entry name" value="RNA_helicase_DEAD_Q_motif"/>
</dbReference>
<dbReference type="InterPro" id="IPR025313">
    <property type="entry name" value="SPB4-like_CTE"/>
</dbReference>
<dbReference type="PANTHER" id="PTHR24031">
    <property type="entry name" value="RNA HELICASE"/>
    <property type="match status" value="1"/>
</dbReference>
<dbReference type="Pfam" id="PF13959">
    <property type="entry name" value="CTE_SPB4"/>
    <property type="match status" value="1"/>
</dbReference>
<dbReference type="Pfam" id="PF00270">
    <property type="entry name" value="DEAD"/>
    <property type="match status" value="1"/>
</dbReference>
<dbReference type="Pfam" id="PF00271">
    <property type="entry name" value="Helicase_C"/>
    <property type="match status" value="1"/>
</dbReference>
<dbReference type="SMART" id="SM00487">
    <property type="entry name" value="DEXDc"/>
    <property type="match status" value="1"/>
</dbReference>
<dbReference type="SMART" id="SM01178">
    <property type="entry name" value="DUF4217"/>
    <property type="match status" value="1"/>
</dbReference>
<dbReference type="SMART" id="SM00490">
    <property type="entry name" value="HELICc"/>
    <property type="match status" value="1"/>
</dbReference>
<dbReference type="SUPFAM" id="SSF52540">
    <property type="entry name" value="P-loop containing nucleoside triphosphate hydrolases"/>
    <property type="match status" value="1"/>
</dbReference>
<dbReference type="PROSITE" id="PS00039">
    <property type="entry name" value="DEAD_ATP_HELICASE"/>
    <property type="match status" value="1"/>
</dbReference>
<dbReference type="PROSITE" id="PS51192">
    <property type="entry name" value="HELICASE_ATP_BIND_1"/>
    <property type="match status" value="1"/>
</dbReference>
<dbReference type="PROSITE" id="PS51194">
    <property type="entry name" value="HELICASE_CTER"/>
    <property type="match status" value="1"/>
</dbReference>
<dbReference type="PROSITE" id="PS51195">
    <property type="entry name" value="Q_MOTIF"/>
    <property type="match status" value="1"/>
</dbReference>
<gene>
    <name type="primary">RH51</name>
    <name type="ordered locus">At3g18600</name>
    <name type="ORF">K24M9.9</name>
</gene>
<evidence type="ECO:0000255" key="1"/>
<evidence type="ECO:0000255" key="2">
    <source>
        <dbReference type="PROSITE-ProRule" id="PRU00541"/>
    </source>
</evidence>
<evidence type="ECO:0000255" key="3">
    <source>
        <dbReference type="PROSITE-ProRule" id="PRU00542"/>
    </source>
</evidence>
<evidence type="ECO:0000256" key="4">
    <source>
        <dbReference type="SAM" id="MobiDB-lite"/>
    </source>
</evidence>
<evidence type="ECO:0000305" key="5"/>
<feature type="chain" id="PRO_0000239191" description="DEAD-box ATP-dependent RNA helicase 51">
    <location>
        <begin position="1"/>
        <end position="568"/>
    </location>
</feature>
<feature type="domain" description="Helicase ATP-binding" evidence="2">
    <location>
        <begin position="120"/>
        <end position="295"/>
    </location>
</feature>
<feature type="domain" description="Helicase C-terminal" evidence="3">
    <location>
        <begin position="321"/>
        <end position="468"/>
    </location>
</feature>
<feature type="region of interest" description="Disordered" evidence="4">
    <location>
        <begin position="1"/>
        <end position="70"/>
    </location>
</feature>
<feature type="region of interest" description="Disordered" evidence="4">
    <location>
        <begin position="540"/>
        <end position="568"/>
    </location>
</feature>
<feature type="coiled-coil region" evidence="1">
    <location>
        <begin position="13"/>
        <end position="78"/>
    </location>
</feature>
<feature type="short sequence motif" description="Q motif">
    <location>
        <begin position="89"/>
        <end position="117"/>
    </location>
</feature>
<feature type="short sequence motif" description="DEAD box">
    <location>
        <begin position="243"/>
        <end position="246"/>
    </location>
</feature>
<feature type="compositionally biased region" description="Basic and acidic residues" evidence="4">
    <location>
        <begin position="1"/>
        <end position="13"/>
    </location>
</feature>
<feature type="compositionally biased region" description="Basic and acidic residues" evidence="4">
    <location>
        <begin position="23"/>
        <end position="47"/>
    </location>
</feature>
<feature type="compositionally biased region" description="Acidic residues" evidence="4">
    <location>
        <begin position="60"/>
        <end position="70"/>
    </location>
</feature>
<feature type="binding site" evidence="2">
    <location>
        <begin position="133"/>
        <end position="140"/>
    </location>
    <ligand>
        <name>ATP</name>
        <dbReference type="ChEBI" id="CHEBI:30616"/>
    </ligand>
</feature>